<comment type="function">
    <text evidence="1">F(1)F(0) ATP synthase produces ATP from ADP in the presence of a proton or sodium gradient. F-type ATPases consist of two structural domains, F(1) containing the extramembraneous catalytic core and F(0) containing the membrane proton channel, linked together by a central stalk and a peripheral stalk. During catalysis, ATP synthesis in the catalytic domain of F(1) is coupled via a rotary mechanism of the central stalk subunits to proton translocation.</text>
</comment>
<comment type="function">
    <text evidence="1">Component of the F(0) channel, it forms part of the peripheral stalk, linking F(1) to F(0). The b'-subunit is a diverged and duplicated form of b found in plants and photosynthetic bacteria.</text>
</comment>
<comment type="subunit">
    <text evidence="1">F-type ATPases have 2 components, F(1) - the catalytic core - and F(0) - the membrane proton channel. F(1) has five subunits: alpha(3), beta(3), gamma(1), delta(1), epsilon(1). F(0) has four main subunits: a(1), b(1), b'(1) and c(10-14). The alpha and beta chains form an alternating ring which encloses part of the gamma chain. F(1) is attached to F(0) by a central stalk formed by the gamma and epsilon chains, while a peripheral stalk is formed by the delta, b and b' chains.</text>
</comment>
<comment type="subcellular location">
    <subcellularLocation>
        <location evidence="1">Cellular thylakoid membrane</location>
        <topology evidence="1">Single-pass membrane protein</topology>
    </subcellularLocation>
</comment>
<comment type="similarity">
    <text evidence="1">Belongs to the ATPase B chain family.</text>
</comment>
<name>ATPF2_SYNY3</name>
<protein>
    <recommendedName>
        <fullName evidence="1">ATP synthase subunit b'</fullName>
    </recommendedName>
    <alternativeName>
        <fullName evidence="1">ATP synthase F(0) sector subunit b'</fullName>
    </alternativeName>
    <alternativeName>
        <fullName evidence="1">ATPase subunit II</fullName>
    </alternativeName>
    <alternativeName>
        <fullName evidence="1">F-type ATPase subunit b'</fullName>
        <shortName evidence="1">F-ATPase subunit b'</shortName>
    </alternativeName>
</protein>
<gene>
    <name evidence="1" type="primary">atpF2</name>
    <name evidence="1" type="synonym">atpG</name>
    <name type="ordered locus">sll1323</name>
</gene>
<keyword id="KW-0066">ATP synthesis</keyword>
<keyword id="KW-0138">CF(0)</keyword>
<keyword id="KW-0375">Hydrogen ion transport</keyword>
<keyword id="KW-0406">Ion transport</keyword>
<keyword id="KW-0472">Membrane</keyword>
<keyword id="KW-1185">Reference proteome</keyword>
<keyword id="KW-0793">Thylakoid</keyword>
<keyword id="KW-0812">Transmembrane</keyword>
<keyword id="KW-1133">Transmembrane helix</keyword>
<keyword id="KW-0813">Transport</keyword>
<evidence type="ECO:0000255" key="1">
    <source>
        <dbReference type="HAMAP-Rule" id="MF_01399"/>
    </source>
</evidence>
<reference key="1">
    <citation type="journal article" date="1991" name="Plant Mol. Biol.">
        <title>The atp1 and atp2 operons of the cyanobacterium Synechocystis sp. PCC 6803.</title>
        <authorList>
            <person name="Lill H."/>
            <person name="Nelson N."/>
        </authorList>
    </citation>
    <scope>NUCLEOTIDE SEQUENCE [GENOMIC DNA]</scope>
</reference>
<reference key="2">
    <citation type="journal article" date="1996" name="DNA Res.">
        <title>Sequence analysis of the genome of the unicellular cyanobacterium Synechocystis sp. strain PCC6803. II. Sequence determination of the entire genome and assignment of potential protein-coding regions.</title>
        <authorList>
            <person name="Kaneko T."/>
            <person name="Sato S."/>
            <person name="Kotani H."/>
            <person name="Tanaka A."/>
            <person name="Asamizu E."/>
            <person name="Nakamura Y."/>
            <person name="Miyajima N."/>
            <person name="Hirosawa M."/>
            <person name="Sugiura M."/>
            <person name="Sasamoto S."/>
            <person name="Kimura T."/>
            <person name="Hosouchi T."/>
            <person name="Matsuno A."/>
            <person name="Muraki A."/>
            <person name="Nakazaki N."/>
            <person name="Naruo K."/>
            <person name="Okumura S."/>
            <person name="Shimpo S."/>
            <person name="Takeuchi C."/>
            <person name="Wada T."/>
            <person name="Watanabe A."/>
            <person name="Yamada M."/>
            <person name="Yasuda M."/>
            <person name="Tabata S."/>
        </authorList>
    </citation>
    <scope>NUCLEOTIDE SEQUENCE [LARGE SCALE GENOMIC DNA]</scope>
    <source>
        <strain>ATCC 27184 / PCC 6803 / Kazusa</strain>
    </source>
</reference>
<proteinExistence type="inferred from homology"/>
<sequence length="143" mass="16245">MFDFDATLPLMALQFVVLAFLLNAIFYKPMNKVLDERADYIRTNEEDARERLAKAKAITQEYEQQITDARRQSQAVIADAQAEARRLAAEKIAEAQRESQRQKETAAQEIEAQRQSALSSLEQEVAALSNQILHKLLGPELIK</sequence>
<accession>P27183</accession>
<feature type="chain" id="PRO_0000082430" description="ATP synthase subunit b'">
    <location>
        <begin position="1"/>
        <end position="143"/>
    </location>
</feature>
<feature type="transmembrane region" description="Helical" evidence="1">
    <location>
        <begin position="6"/>
        <end position="26"/>
    </location>
</feature>
<organism>
    <name type="scientific">Synechocystis sp. (strain ATCC 27184 / PCC 6803 / Kazusa)</name>
    <dbReference type="NCBI Taxonomy" id="1111708"/>
    <lineage>
        <taxon>Bacteria</taxon>
        <taxon>Bacillati</taxon>
        <taxon>Cyanobacteriota</taxon>
        <taxon>Cyanophyceae</taxon>
        <taxon>Synechococcales</taxon>
        <taxon>Merismopediaceae</taxon>
        <taxon>Synechocystis</taxon>
    </lineage>
</organism>
<dbReference type="EMBL" id="X58128">
    <property type="protein sequence ID" value="CAA41132.1"/>
    <property type="molecule type" value="Genomic_DNA"/>
</dbReference>
<dbReference type="EMBL" id="BA000022">
    <property type="protein sequence ID" value="BAA16738.1"/>
    <property type="molecule type" value="Genomic_DNA"/>
</dbReference>
<dbReference type="PIR" id="S17748">
    <property type="entry name" value="PWYBBI"/>
</dbReference>
<dbReference type="SMR" id="P27183"/>
<dbReference type="IntAct" id="P27183">
    <property type="interactions" value="8"/>
</dbReference>
<dbReference type="STRING" id="1148.gene:10497593"/>
<dbReference type="PaxDb" id="1148-1651811"/>
<dbReference type="EnsemblBacteria" id="BAA16738">
    <property type="protein sequence ID" value="BAA16738"/>
    <property type="gene ID" value="BAA16738"/>
</dbReference>
<dbReference type="KEGG" id="syn:sll1323"/>
<dbReference type="eggNOG" id="COG0711">
    <property type="taxonomic scope" value="Bacteria"/>
</dbReference>
<dbReference type="InParanoid" id="P27183"/>
<dbReference type="PhylomeDB" id="P27183"/>
<dbReference type="Proteomes" id="UP000001425">
    <property type="component" value="Chromosome"/>
</dbReference>
<dbReference type="GO" id="GO:0005886">
    <property type="term" value="C:plasma membrane"/>
    <property type="evidence" value="ECO:0000314"/>
    <property type="project" value="UniProtKB"/>
</dbReference>
<dbReference type="GO" id="GO:0031676">
    <property type="term" value="C:plasma membrane-derived thylakoid membrane"/>
    <property type="evidence" value="ECO:0007669"/>
    <property type="project" value="UniProtKB-SubCell"/>
</dbReference>
<dbReference type="GO" id="GO:0045259">
    <property type="term" value="C:proton-transporting ATP synthase complex"/>
    <property type="evidence" value="ECO:0000314"/>
    <property type="project" value="UniProtKB"/>
</dbReference>
<dbReference type="GO" id="GO:0046933">
    <property type="term" value="F:proton-transporting ATP synthase activity, rotational mechanism"/>
    <property type="evidence" value="ECO:0007669"/>
    <property type="project" value="UniProtKB-UniRule"/>
</dbReference>
<dbReference type="CDD" id="cd06503">
    <property type="entry name" value="ATP-synt_Fo_b"/>
    <property type="match status" value="1"/>
</dbReference>
<dbReference type="HAMAP" id="MF_01398">
    <property type="entry name" value="ATP_synth_b_bprime"/>
    <property type="match status" value="1"/>
</dbReference>
<dbReference type="HAMAP" id="MF_01399">
    <property type="entry name" value="ATP_synth_bprime"/>
    <property type="match status" value="1"/>
</dbReference>
<dbReference type="InterPro" id="IPR034679">
    <property type="entry name" value="ATP_synth_b"/>
</dbReference>
<dbReference type="InterPro" id="IPR028987">
    <property type="entry name" value="ATP_synth_B-like_membr_sf"/>
</dbReference>
<dbReference type="InterPro" id="IPR002146">
    <property type="entry name" value="ATP_synth_b/b'su_bac/chlpt"/>
</dbReference>
<dbReference type="InterPro" id="IPR050059">
    <property type="entry name" value="ATP_synthase_B_chain"/>
</dbReference>
<dbReference type="NCBIfam" id="NF005607">
    <property type="entry name" value="PRK07353.1"/>
    <property type="match status" value="1"/>
</dbReference>
<dbReference type="PANTHER" id="PTHR33445">
    <property type="entry name" value="ATP SYNTHASE SUBUNIT B', CHLOROPLASTIC"/>
    <property type="match status" value="1"/>
</dbReference>
<dbReference type="PANTHER" id="PTHR33445:SF2">
    <property type="entry name" value="ATP SYNTHASE SUBUNIT B', CHLOROPLASTIC"/>
    <property type="match status" value="1"/>
</dbReference>
<dbReference type="Pfam" id="PF00430">
    <property type="entry name" value="ATP-synt_B"/>
    <property type="match status" value="1"/>
</dbReference>
<dbReference type="SUPFAM" id="SSF81573">
    <property type="entry name" value="F1F0 ATP synthase subunit B, membrane domain"/>
    <property type="match status" value="1"/>
</dbReference>